<keyword id="KW-0276">Fatty acid metabolism</keyword>
<keyword id="KW-0436">Ligase</keyword>
<keyword id="KW-0443">Lipid metabolism</keyword>
<keyword id="KW-1185">Reference proteome</keyword>
<reference key="1">
    <citation type="journal article" date="2003" name="Proc. Natl. Acad. Sci. U.S.A.">
        <title>The complete genome sequence of Mycobacterium bovis.</title>
        <authorList>
            <person name="Garnier T."/>
            <person name="Eiglmeier K."/>
            <person name="Camus J.-C."/>
            <person name="Medina N."/>
            <person name="Mansoor H."/>
            <person name="Pryor M."/>
            <person name="Duthoy S."/>
            <person name="Grondin S."/>
            <person name="Lacroix C."/>
            <person name="Monsempe C."/>
            <person name="Simon S."/>
            <person name="Harris B."/>
            <person name="Atkin R."/>
            <person name="Doggett J."/>
            <person name="Mayes R."/>
            <person name="Keating L."/>
            <person name="Wheeler P.R."/>
            <person name="Parkhill J."/>
            <person name="Barrell B.G."/>
            <person name="Cole S.T."/>
            <person name="Gordon S.V."/>
            <person name="Hewinson R.G."/>
        </authorList>
    </citation>
    <scope>NUCLEOTIDE SEQUENCE [LARGE SCALE GENOMIC DNA]</scope>
    <source>
        <strain>ATCC BAA-935 / AF2122/97</strain>
    </source>
</reference>
<reference key="2">
    <citation type="journal article" date="2017" name="Genome Announc.">
        <title>Updated reference genome sequence and annotation of Mycobacterium bovis AF2122/97.</title>
        <authorList>
            <person name="Malone K.M."/>
            <person name="Farrell D."/>
            <person name="Stuber T.P."/>
            <person name="Schubert O.T."/>
            <person name="Aebersold R."/>
            <person name="Robbe-Austerman S."/>
            <person name="Gordon S.V."/>
        </authorList>
    </citation>
    <scope>NUCLEOTIDE SEQUENCE [LARGE SCALE GENOMIC DNA]</scope>
    <scope>GENOME REANNOTATION</scope>
    <source>
        <strain>ATCC BAA-935 / AF2122/97</strain>
    </source>
</reference>
<reference key="3">
    <citation type="journal article" date="2010" name="FEBS J.">
        <title>Delineation of the roles of FadD22, FadD26 and FadD29 in the biosynthesis of phthiocerol dimycocerosates and related compounds in Mycobacterium tuberculosis.</title>
        <authorList>
            <person name="Simeone R."/>
            <person name="Leger M."/>
            <person name="Constant P."/>
            <person name="Malaga W."/>
            <person name="Marrakchi H."/>
            <person name="Daffe M."/>
            <person name="Guilhot C."/>
            <person name="Chalut C."/>
        </authorList>
    </citation>
    <scope>FUNCTION IN THE BIOSYNTHESIS OF PHTHIOCEROL</scope>
    <scope>PATHWAY</scope>
    <scope>DISRUPTION PHENOTYPE</scope>
</reference>
<protein>
    <recommendedName>
        <fullName>Long-chain-fatty-acid--AMP ligase FadD26</fullName>
        <shortName>FAAL</shortName>
        <ecNumber evidence="1">6.2.1.59</ecNumber>
    </recommendedName>
    <alternativeName>
        <fullName>Acyl-AMP synthetase</fullName>
    </alternativeName>
</protein>
<organism>
    <name type="scientific">Mycobacterium bovis (strain ATCC BAA-935 / AF2122/97)</name>
    <dbReference type="NCBI Taxonomy" id="233413"/>
    <lineage>
        <taxon>Bacteria</taxon>
        <taxon>Bacillati</taxon>
        <taxon>Actinomycetota</taxon>
        <taxon>Actinomycetes</taxon>
        <taxon>Mycobacteriales</taxon>
        <taxon>Mycobacteriaceae</taxon>
        <taxon>Mycobacterium</taxon>
        <taxon>Mycobacterium tuberculosis complex</taxon>
    </lineage>
</organism>
<dbReference type="EC" id="6.2.1.59" evidence="1"/>
<dbReference type="EMBL" id="LT708304">
    <property type="protein sequence ID" value="SIU01576.1"/>
    <property type="molecule type" value="Genomic_DNA"/>
</dbReference>
<dbReference type="RefSeq" id="NP_856600.1">
    <property type="nucleotide sequence ID" value="NC_002945.3"/>
</dbReference>
<dbReference type="RefSeq" id="WP_003904960.1">
    <property type="nucleotide sequence ID" value="NC_002945.4"/>
</dbReference>
<dbReference type="SMR" id="Q7TXM1"/>
<dbReference type="KEGG" id="mbo:BQ2027_MB2955"/>
<dbReference type="PATRIC" id="fig|233413.5.peg.3243"/>
<dbReference type="BioCyc" id="MetaCyc:MONOMER-19625"/>
<dbReference type="UniPathway" id="UPA00094"/>
<dbReference type="Proteomes" id="UP000001419">
    <property type="component" value="Chromosome"/>
</dbReference>
<dbReference type="GO" id="GO:0005886">
    <property type="term" value="C:plasma membrane"/>
    <property type="evidence" value="ECO:0007669"/>
    <property type="project" value="TreeGrafter"/>
</dbReference>
<dbReference type="GO" id="GO:0070566">
    <property type="term" value="F:adenylyltransferase activity"/>
    <property type="evidence" value="ECO:0007669"/>
    <property type="project" value="TreeGrafter"/>
</dbReference>
<dbReference type="GO" id="GO:0016874">
    <property type="term" value="F:ligase activity"/>
    <property type="evidence" value="ECO:0007669"/>
    <property type="project" value="UniProtKB-KW"/>
</dbReference>
<dbReference type="GO" id="GO:0071766">
    <property type="term" value="P:Actinobacterium-type cell wall biogenesis"/>
    <property type="evidence" value="ECO:0000315"/>
    <property type="project" value="UniProtKB"/>
</dbReference>
<dbReference type="GO" id="GO:0006633">
    <property type="term" value="P:fatty acid biosynthetic process"/>
    <property type="evidence" value="ECO:0007669"/>
    <property type="project" value="UniProtKB-UniPathway"/>
</dbReference>
<dbReference type="GO" id="GO:0008610">
    <property type="term" value="P:lipid biosynthetic process"/>
    <property type="evidence" value="ECO:0000315"/>
    <property type="project" value="UniProtKB"/>
</dbReference>
<dbReference type="CDD" id="cd05931">
    <property type="entry name" value="FAAL"/>
    <property type="match status" value="1"/>
</dbReference>
<dbReference type="FunFam" id="3.30.300.30:FF:000016">
    <property type="entry name" value="Fatty-acid-CoA ligase FadD26"/>
    <property type="match status" value="1"/>
</dbReference>
<dbReference type="FunFam" id="3.40.50.12780:FF:000013">
    <property type="entry name" value="Long-chain-fatty-acid--AMP ligase FadD32"/>
    <property type="match status" value="1"/>
</dbReference>
<dbReference type="Gene3D" id="3.30.300.30">
    <property type="match status" value="1"/>
</dbReference>
<dbReference type="Gene3D" id="3.40.50.12780">
    <property type="entry name" value="N-terminal domain of ligase-like"/>
    <property type="match status" value="1"/>
</dbReference>
<dbReference type="InterPro" id="IPR025110">
    <property type="entry name" value="AMP-bd_C"/>
</dbReference>
<dbReference type="InterPro" id="IPR045851">
    <property type="entry name" value="AMP-bd_C_sf"/>
</dbReference>
<dbReference type="InterPro" id="IPR000873">
    <property type="entry name" value="AMP-dep_synth/lig_dom"/>
</dbReference>
<dbReference type="InterPro" id="IPR042099">
    <property type="entry name" value="ANL_N_sf"/>
</dbReference>
<dbReference type="InterPro" id="IPR040097">
    <property type="entry name" value="FAAL/FAAC"/>
</dbReference>
<dbReference type="NCBIfam" id="NF004509">
    <property type="entry name" value="PRK05850.1"/>
    <property type="match status" value="1"/>
</dbReference>
<dbReference type="PANTHER" id="PTHR22754:SF32">
    <property type="entry name" value="DISCO-INTERACTING PROTEIN 2"/>
    <property type="match status" value="1"/>
</dbReference>
<dbReference type="PANTHER" id="PTHR22754">
    <property type="entry name" value="DISCO-INTERACTING PROTEIN 2 DIP2 -RELATED"/>
    <property type="match status" value="1"/>
</dbReference>
<dbReference type="Pfam" id="PF00501">
    <property type="entry name" value="AMP-binding"/>
    <property type="match status" value="1"/>
</dbReference>
<dbReference type="Pfam" id="PF23024">
    <property type="entry name" value="AMP-dom_DIP2-like"/>
    <property type="match status" value="1"/>
</dbReference>
<dbReference type="SUPFAM" id="SSF56801">
    <property type="entry name" value="Acetyl-CoA synthetase-like"/>
    <property type="match status" value="1"/>
</dbReference>
<name>FAA26_MYCBO</name>
<proteinExistence type="evidence at protein level"/>
<gene>
    <name type="primary">fadD26</name>
    <name type="ordered locus">BQ2027_MB2955</name>
</gene>
<accession>Q7TXM1</accession>
<accession>A0A1R3Y3F0</accession>
<accession>X2BLX3</accession>
<feature type="chain" id="PRO_0000406353" description="Long-chain-fatty-acid--AMP ligase FadD26">
    <location>
        <begin position="1"/>
        <end position="583"/>
    </location>
</feature>
<evidence type="ECO:0000250" key="1">
    <source>
        <dbReference type="UniProtKB" id="P9WQ43"/>
    </source>
</evidence>
<evidence type="ECO:0000269" key="2">
    <source>
    </source>
</evidence>
<evidence type="ECO:0000305" key="3"/>
<sequence>MPVTDRSVPSLLQERADQQPDSTAYTYIDYGSDPKGFADSLTWSQVYSRACIIAEELKLCGLPGDRVAVLAPQGLEYVLAFLGALQAGFIAVPLSTPQYGIHDDRVSAVLQDSKPVAILTTSSVVGDVTKYAASHDGQPAPVVVEVDLLDLDSPRQMPAFSRQHTGAAYLQYTSGSTRTPAGVIVSHTNVIANVTQSMYGYFGDPAKIPTGTVVSWLPLYHDMGLILGICAPLVARRRAVLMSPMSFLRRPARWMQLLATSGRCFSAAPNFAFELAVRRTSDQDMAGLDLRDVVGIVSGSERIHVATVRRFIERFAPYNLSPTAIRPSYGLAEATLYVAAPEAGAAPKTVRFDYEQLTAGQARPCGTDGSVGTELISYGSPDPSSVRIVNPETMVENPPGVVGEIWVHGDHVTMGYWQKPKQTAQVFDAKLVDPAPAAPEGPWLRTGDLGVISDGELFIMGRIKDLLIVDGRNHYPDDIEATIQEITGGRAAAIAVPDDITEQLVAIIEFKRRGSTAEEVMLKLRSVKREVTSAISKSHSLRVADLVLVSPGSIPITTSGKIRRSACVERYRSDGFKRLDVAV</sequence>
<comment type="function">
    <text evidence="2">Catalyzes the activation of long-chain fatty acids as acyl-adenylates (acyl-AMP), which are then transferred to the multifunctional polyketide synthase PpsA for further chain extension. Catalyzes the adenylation of the long-chain fatty acids eicosanoate (C20) or docosanoate (C22), and potentially the very-long-chain fatty acid lignocerate (C24). Involved in the biosynthesis of phthiocerol dimycocerosate (DIM A) and phthiodiolone dimycocerosate (DIM B).</text>
</comment>
<comment type="catalytic activity">
    <reaction evidence="1">
        <text>holo-[(phenol)carboxyphthiodiolenone synthase] + a long-chain fatty acid + ATP = a long-chain fatty acyl-[(phenol)carboxyphthiodiolenone synthase] + AMP + diphosphate</text>
        <dbReference type="Rhea" id="RHEA:64660"/>
        <dbReference type="Rhea" id="RHEA-COMP:14271"/>
        <dbReference type="Rhea" id="RHEA-COMP:16648"/>
        <dbReference type="ChEBI" id="CHEBI:30616"/>
        <dbReference type="ChEBI" id="CHEBI:33019"/>
        <dbReference type="ChEBI" id="CHEBI:57560"/>
        <dbReference type="ChEBI" id="CHEBI:64479"/>
        <dbReference type="ChEBI" id="CHEBI:133243"/>
        <dbReference type="ChEBI" id="CHEBI:456215"/>
        <dbReference type="EC" id="6.2.1.59"/>
    </reaction>
</comment>
<comment type="catalytic activity">
    <reaction evidence="1">
        <text>eicosanoate + holo-[(phenol)carboxyphthiodiolenone synthase] + ATP = icosanoyl-[(phenol)carboxyphthiodiolenone synthase] + AMP + diphosphate</text>
        <dbReference type="Rhea" id="RHEA:59156"/>
        <dbReference type="Rhea" id="RHEA-COMP:14271"/>
        <dbReference type="Rhea" id="RHEA-COMP:14985"/>
        <dbReference type="ChEBI" id="CHEBI:30616"/>
        <dbReference type="ChEBI" id="CHEBI:32360"/>
        <dbReference type="ChEBI" id="CHEBI:33019"/>
        <dbReference type="ChEBI" id="CHEBI:64479"/>
        <dbReference type="ChEBI" id="CHEBI:87848"/>
        <dbReference type="ChEBI" id="CHEBI:456215"/>
        <dbReference type="EC" id="6.2.1.59"/>
    </reaction>
</comment>
<comment type="catalytic activity">
    <reaction evidence="1">
        <text>holo-[(phenol)carboxyphthiodiolenone synthase] + docosanoate + ATP = docosanoyl-[(phenol)carboxyphthiodiolenone synthase] + AMP + diphosphate</text>
        <dbReference type="Rhea" id="RHEA:59160"/>
        <dbReference type="Rhea" id="RHEA-COMP:14271"/>
        <dbReference type="Rhea" id="RHEA-COMP:14987"/>
        <dbReference type="ChEBI" id="CHEBI:23858"/>
        <dbReference type="ChEBI" id="CHEBI:30616"/>
        <dbReference type="ChEBI" id="CHEBI:33019"/>
        <dbReference type="ChEBI" id="CHEBI:64479"/>
        <dbReference type="ChEBI" id="CHEBI:142238"/>
        <dbReference type="ChEBI" id="CHEBI:456215"/>
        <dbReference type="EC" id="6.2.1.59"/>
    </reaction>
</comment>
<comment type="pathway">
    <text evidence="2">Lipid metabolism; fatty acid biosynthesis.</text>
</comment>
<comment type="disruption phenotype">
    <text evidence="2">Disruption of the gene abolishes the production of phthiocerol dimycocerosate (DIM A) and of phthiodiolone dimycocerosate (DIM B). Mutant can still produce mycoside B.</text>
</comment>
<comment type="similarity">
    <text evidence="3">Belongs to the ATP-dependent AMP-binding enzyme family.</text>
</comment>